<reference key="1">
    <citation type="journal article" date="1995" name="Proc. Natl. Acad. Sci. U.S.A.">
        <title>ndhF sequence evolution and the major clades in the sunflower family.</title>
        <authorList>
            <person name="Kim K.-J."/>
            <person name="Jansen R.K."/>
        </authorList>
    </citation>
    <scope>NUCLEOTIDE SEQUENCE [GENOMIC DNA]</scope>
</reference>
<geneLocation type="chloroplast"/>
<feature type="chain" id="PRO_0000118183" description="NAD(P)H-quinone oxidoreductase subunit 5, chloroplastic">
    <location>
        <begin position="1"/>
        <end position="741"/>
    </location>
</feature>
<feature type="transmembrane region" description="Helical" evidence="2">
    <location>
        <begin position="9"/>
        <end position="29"/>
    </location>
</feature>
<feature type="transmembrane region" description="Helical" evidence="2">
    <location>
        <begin position="40"/>
        <end position="60"/>
    </location>
</feature>
<feature type="transmembrane region" description="Helical" evidence="2">
    <location>
        <begin position="89"/>
        <end position="109"/>
    </location>
</feature>
<feature type="transmembrane region" description="Helical" evidence="2">
    <location>
        <begin position="125"/>
        <end position="145"/>
    </location>
</feature>
<feature type="transmembrane region" description="Helical" evidence="2">
    <location>
        <begin position="147"/>
        <end position="167"/>
    </location>
</feature>
<feature type="transmembrane region" description="Helical" evidence="2">
    <location>
        <begin position="185"/>
        <end position="205"/>
    </location>
</feature>
<feature type="transmembrane region" description="Helical" evidence="2">
    <location>
        <begin position="219"/>
        <end position="239"/>
    </location>
</feature>
<feature type="transmembrane region" description="Helical" evidence="2">
    <location>
        <begin position="258"/>
        <end position="278"/>
    </location>
</feature>
<feature type="transmembrane region" description="Helical" evidence="2">
    <location>
        <begin position="284"/>
        <end position="304"/>
    </location>
</feature>
<feature type="transmembrane region" description="Helical" evidence="2">
    <location>
        <begin position="327"/>
        <end position="347"/>
    </location>
</feature>
<feature type="transmembrane region" description="Helical" evidence="2">
    <location>
        <begin position="354"/>
        <end position="374"/>
    </location>
</feature>
<feature type="transmembrane region" description="Helical" evidence="2">
    <location>
        <begin position="396"/>
        <end position="416"/>
    </location>
</feature>
<feature type="transmembrane region" description="Helical" evidence="2">
    <location>
        <begin position="425"/>
        <end position="445"/>
    </location>
</feature>
<feature type="transmembrane region" description="Helical" evidence="2">
    <location>
        <begin position="549"/>
        <end position="569"/>
    </location>
</feature>
<feature type="transmembrane region" description="Helical" evidence="2">
    <location>
        <begin position="605"/>
        <end position="625"/>
    </location>
</feature>
<feature type="transmembrane region" description="Helical" evidence="2">
    <location>
        <begin position="721"/>
        <end position="741"/>
    </location>
</feature>
<organism>
    <name type="scientific">Flaveria ramosissima</name>
    <name type="common">Yellowtops</name>
    <dbReference type="NCBI Taxonomy" id="41578"/>
    <lineage>
        <taxon>Eukaryota</taxon>
        <taxon>Viridiplantae</taxon>
        <taxon>Streptophyta</taxon>
        <taxon>Embryophyta</taxon>
        <taxon>Tracheophyta</taxon>
        <taxon>Spermatophyta</taxon>
        <taxon>Magnoliopsida</taxon>
        <taxon>eudicotyledons</taxon>
        <taxon>Gunneridae</taxon>
        <taxon>Pentapetalae</taxon>
        <taxon>asterids</taxon>
        <taxon>campanulids</taxon>
        <taxon>Asterales</taxon>
        <taxon>Asteraceae</taxon>
        <taxon>Asteroideae</taxon>
        <taxon>Heliantheae alliance</taxon>
        <taxon>Tageteae</taxon>
        <taxon>Flaveria</taxon>
    </lineage>
</organism>
<accession>Q32238</accession>
<sequence length="741" mass="83949">MEQTYQYAWIIPFLPLPVPMLIGLGLLLFPTATKSIRRMWAFQSVLLLSIVMIFSMNLSIQQINSSSVYQYVWSWIINNDISLEFGYLIDPLTSIMSILITTVGIMVLIYSDNYMSHDHGYLRFFAYMSFFSTSMLGLVTSSNLIQIYIFWELVGMCSYLLIGFWFTRPVAAKACQKAFVTNRVGDFGLLLGILGFYWITGSFEFRDLFQIFNNLISNNEVNLLFVTLCAVLLFAGAIAKSAQFPLHVWLPDAMEGPTPISALIHAATMVAAGIFLVARLMPLFIVIPHIMNFISLIGIITVFFGATLALAQKDIKRGLAYSTMSQLGYMMLALGMGSYRSALFHLITHAYSKALLFLGSGSVIHSMETLVGYCPKKSQNMVLMGGLTKHVPITKNSFLLGTLSLCGIPPLACFWSKDEILNDSWLYSPIFAIIAWSTAGLTAFYMCRIYLLTFEGHLNVHFQNYSGKRNTPLYSISLWGKEGSKISNKNFRLVTLLKMKKNGPPSFFSNKVYKMDENVGNLVQPFISIPNFGNTKTSLYPYESDNTMLFPILIFIPFTLFVGFLGIPFNQDVDILSKWLTPSINLLHKNSNNLIDWYEFSKDAVFSVSIASFGIFIAFFLYKPVYSSFQNLDLINSFVKMGPKRIFSDKIKNAIYDWSYNRGYIDAFYGTFLTVGVRKLAEFTHFFDRRIIDGIPNGVGFISFFVAEVIKSVGGGRISSYLFFYFSYVSIFLLIYYFLNF</sequence>
<protein>
    <recommendedName>
        <fullName>NAD(P)H-quinone oxidoreductase subunit 5, chloroplastic</fullName>
        <ecNumber>7.1.1.-</ecNumber>
    </recommendedName>
    <alternativeName>
        <fullName>NAD(P)H dehydrogenase subunit 5</fullName>
    </alternativeName>
    <alternativeName>
        <fullName>NADH-plastoquinone oxidoreductase subunit 5</fullName>
    </alternativeName>
</protein>
<proteinExistence type="inferred from homology"/>
<evidence type="ECO:0000250" key="1"/>
<evidence type="ECO:0000255" key="2"/>
<evidence type="ECO:0000305" key="3"/>
<gene>
    <name type="primary">ndhF</name>
</gene>
<name>NU5C_FLARA</name>
<keyword id="KW-0150">Chloroplast</keyword>
<keyword id="KW-0472">Membrane</keyword>
<keyword id="KW-0520">NAD</keyword>
<keyword id="KW-0521">NADP</keyword>
<keyword id="KW-0934">Plastid</keyword>
<keyword id="KW-0618">Plastoquinone</keyword>
<keyword id="KW-0874">Quinone</keyword>
<keyword id="KW-0793">Thylakoid</keyword>
<keyword id="KW-1278">Translocase</keyword>
<keyword id="KW-0812">Transmembrane</keyword>
<keyword id="KW-1133">Transmembrane helix</keyword>
<keyword id="KW-0813">Transport</keyword>
<dbReference type="EC" id="7.1.1.-"/>
<dbReference type="EMBL" id="L39465">
    <property type="protein sequence ID" value="AAC37748.1"/>
    <property type="molecule type" value="Genomic_DNA"/>
</dbReference>
<dbReference type="PIR" id="T13086">
    <property type="entry name" value="T13086"/>
</dbReference>
<dbReference type="SMR" id="Q32238"/>
<dbReference type="GO" id="GO:0009535">
    <property type="term" value="C:chloroplast thylakoid membrane"/>
    <property type="evidence" value="ECO:0007669"/>
    <property type="project" value="UniProtKB-SubCell"/>
</dbReference>
<dbReference type="GO" id="GO:0008137">
    <property type="term" value="F:NADH dehydrogenase (ubiquinone) activity"/>
    <property type="evidence" value="ECO:0007669"/>
    <property type="project" value="InterPro"/>
</dbReference>
<dbReference type="GO" id="GO:0048038">
    <property type="term" value="F:quinone binding"/>
    <property type="evidence" value="ECO:0007669"/>
    <property type="project" value="UniProtKB-KW"/>
</dbReference>
<dbReference type="GO" id="GO:0042773">
    <property type="term" value="P:ATP synthesis coupled electron transport"/>
    <property type="evidence" value="ECO:0007669"/>
    <property type="project" value="InterPro"/>
</dbReference>
<dbReference type="GO" id="GO:0015990">
    <property type="term" value="P:electron transport coupled proton transport"/>
    <property type="evidence" value="ECO:0007669"/>
    <property type="project" value="TreeGrafter"/>
</dbReference>
<dbReference type="Gene3D" id="1.20.5.2700">
    <property type="match status" value="1"/>
</dbReference>
<dbReference type="InterPro" id="IPR002128">
    <property type="entry name" value="NADH_UbQ_OxRdtase_chlpt_su5_C"/>
</dbReference>
<dbReference type="InterPro" id="IPR018393">
    <property type="entry name" value="NADHpl_OxRdtase_5_subgr"/>
</dbReference>
<dbReference type="InterPro" id="IPR001750">
    <property type="entry name" value="ND/Mrp_TM"/>
</dbReference>
<dbReference type="InterPro" id="IPR003945">
    <property type="entry name" value="NU5C-like"/>
</dbReference>
<dbReference type="InterPro" id="IPR001516">
    <property type="entry name" value="Proton_antipo_N"/>
</dbReference>
<dbReference type="NCBIfam" id="TIGR01974">
    <property type="entry name" value="NDH_I_L"/>
    <property type="match status" value="1"/>
</dbReference>
<dbReference type="NCBIfam" id="NF005141">
    <property type="entry name" value="PRK06590.1"/>
    <property type="match status" value="1"/>
</dbReference>
<dbReference type="PANTHER" id="PTHR42829">
    <property type="entry name" value="NADH-UBIQUINONE OXIDOREDUCTASE CHAIN 5"/>
    <property type="match status" value="1"/>
</dbReference>
<dbReference type="PANTHER" id="PTHR42829:SF2">
    <property type="entry name" value="NADH-UBIQUINONE OXIDOREDUCTASE CHAIN 5"/>
    <property type="match status" value="1"/>
</dbReference>
<dbReference type="Pfam" id="PF01010">
    <property type="entry name" value="Proton_antipo_C"/>
    <property type="match status" value="1"/>
</dbReference>
<dbReference type="Pfam" id="PF00361">
    <property type="entry name" value="Proton_antipo_M"/>
    <property type="match status" value="1"/>
</dbReference>
<dbReference type="Pfam" id="PF00662">
    <property type="entry name" value="Proton_antipo_N"/>
    <property type="match status" value="1"/>
</dbReference>
<dbReference type="PRINTS" id="PR01434">
    <property type="entry name" value="NADHDHGNASE5"/>
</dbReference>
<dbReference type="PRINTS" id="PR01435">
    <property type="entry name" value="NPOXDRDTASE5"/>
</dbReference>
<comment type="function">
    <text evidence="1">NDH shuttles electrons from NAD(P)H:plastoquinone, via FMN and iron-sulfur (Fe-S) centers, to quinones in the photosynthetic chain and possibly in a chloroplast respiratory chain. The immediate electron acceptor for the enzyme in this species is believed to be plastoquinone. Couples the redox reaction to proton translocation, and thus conserves the redox energy in a proton gradient (By similarity).</text>
</comment>
<comment type="catalytic activity">
    <reaction>
        <text>a plastoquinone + NADH + (n+1) H(+)(in) = a plastoquinol + NAD(+) + n H(+)(out)</text>
        <dbReference type="Rhea" id="RHEA:42608"/>
        <dbReference type="Rhea" id="RHEA-COMP:9561"/>
        <dbReference type="Rhea" id="RHEA-COMP:9562"/>
        <dbReference type="ChEBI" id="CHEBI:15378"/>
        <dbReference type="ChEBI" id="CHEBI:17757"/>
        <dbReference type="ChEBI" id="CHEBI:57540"/>
        <dbReference type="ChEBI" id="CHEBI:57945"/>
        <dbReference type="ChEBI" id="CHEBI:62192"/>
    </reaction>
</comment>
<comment type="catalytic activity">
    <reaction>
        <text>a plastoquinone + NADPH + (n+1) H(+)(in) = a plastoquinol + NADP(+) + n H(+)(out)</text>
        <dbReference type="Rhea" id="RHEA:42612"/>
        <dbReference type="Rhea" id="RHEA-COMP:9561"/>
        <dbReference type="Rhea" id="RHEA-COMP:9562"/>
        <dbReference type="ChEBI" id="CHEBI:15378"/>
        <dbReference type="ChEBI" id="CHEBI:17757"/>
        <dbReference type="ChEBI" id="CHEBI:57783"/>
        <dbReference type="ChEBI" id="CHEBI:58349"/>
        <dbReference type="ChEBI" id="CHEBI:62192"/>
    </reaction>
</comment>
<comment type="subunit">
    <text evidence="1">NDH is composed of at least 16 different subunits, 5 of which are encoded in the nucleus.</text>
</comment>
<comment type="subcellular location">
    <subcellularLocation>
        <location evidence="1">Plastid</location>
        <location evidence="1">Chloroplast thylakoid membrane</location>
        <topology evidence="1">Multi-pass membrane protein</topology>
    </subcellularLocation>
</comment>
<comment type="similarity">
    <text evidence="3">Belongs to the complex I subunit 5 family.</text>
</comment>